<reference key="1">
    <citation type="journal article" date="1985" name="Cell">
        <title>Nucleotide sequence of the AIDS virus, LAV.</title>
        <authorList>
            <person name="Wain-Hobson S."/>
            <person name="Sonigo P."/>
            <person name="Danos O."/>
            <person name="Cole S."/>
            <person name="Alizon M."/>
        </authorList>
    </citation>
    <scope>NUCLEOTIDE SEQUENCE [GENOMIC RNA]</scope>
</reference>
<reference key="2">
    <citation type="submission" date="1988-06" db="EMBL/GenBank/DDBJ databases">
        <authorList>
            <person name="Buckler C.E."/>
            <person name="Buckler-White A.J."/>
            <person name="Willey R.L."/>
            <person name="McCoy J."/>
        </authorList>
    </citation>
    <scope>NUCLEOTIDE SEQUENCE [GENOMIC RNA]</scope>
    <source>
        <strain>Clone pNL4-3</strain>
    </source>
</reference>
<reference key="3">
    <citation type="journal article" date="1990" name="J. Acquir. Immune Defic. Syndr.">
        <title>Identification of HIV-1 vpr product and function.</title>
        <authorList>
            <person name="Cohen E.A."/>
            <person name="Terwilliger E.F."/>
            <person name="Jalinoos Y."/>
            <person name="Proulx J."/>
            <person name="Sodroski J.G."/>
            <person name="Haseltine W.A."/>
        </authorList>
    </citation>
    <scope>FUNCTION</scope>
</reference>
<reference key="4">
    <citation type="journal article" date="1990" name="J. Virol.">
        <title>Human immunodeficiency virus vpr product is a virion-associated regulatory protein.</title>
        <authorList>
            <person name="Cohen E.A."/>
            <person name="Dehni G."/>
            <person name="Sodroski J.G."/>
            <person name="Haseltine W.A."/>
        </authorList>
    </citation>
    <scope>FUNCTION</scope>
</reference>
<reference key="5">
    <citation type="journal article" date="1993" name="J. Virol.">
        <title>Human immunodeficiency virus type 1 viral protein R localization in infected cells and virions.</title>
        <authorList>
            <person name="Lu Y.L."/>
            <person name="Spearman P."/>
            <person name="Ratner L."/>
        </authorList>
    </citation>
    <scope>SUBCELLULAR LOCATION</scope>
</reference>
<reference key="6">
    <citation type="journal article" date="1993" name="J. Virol.">
        <title>Incorporation of Vpr into human immunodeficiency virus type 1 virions: requirement for the p6 region of gag and mutational analysis.</title>
        <authorList>
            <person name="Paxton W."/>
            <person name="Connor R.I."/>
            <person name="Landau N.R."/>
        </authorList>
    </citation>
    <scope>MUTAGENESIS OF ARG-32; ARG-62 AND CYS-76</scope>
</reference>
<reference key="7">
    <citation type="journal article" date="1994" name="Proc. Natl. Acad. Sci. U.S.A.">
        <title>The Vpr protein of human immunodeficiency virus type 1 influences nuclear localization of viral nucleic acids in nondividing host cells.</title>
        <authorList>
            <person name="Heinzinger N.K."/>
            <person name="Bukinsky M.I."/>
            <person name="Haggerty S.A."/>
            <person name="Ragland A.M."/>
            <person name="Kewalramani V."/>
            <person name="Lee M.A."/>
            <person name="Gendelman H.E."/>
            <person name="Ratner L."/>
            <person name="Stevenson M."/>
            <person name="Emerman M."/>
        </authorList>
    </citation>
    <scope>FUNCTION</scope>
</reference>
<reference key="8">
    <citation type="journal article" date="1995" name="J. Biol. Chem.">
        <title>Interaction of virion protein Vpr of human immunodeficiency virus type 1 with cellular transcription factor Sp1 and trans-activation of viral long terminal repeat.</title>
        <authorList>
            <person name="Wang L."/>
            <person name="Mukherjee S."/>
            <person name="Jia F."/>
            <person name="Narayan O."/>
            <person name="Zhao L.J."/>
        </authorList>
    </citation>
    <scope>INTERACTION WITH HUMAN SP1</scope>
</reference>
<reference key="9">
    <citation type="journal article" date="1995" name="Proc. Natl. Acad. Sci. U.S.A.">
        <title>The glucocorticoid receptor type II complex is a target of the HIV-1 vpr gene product.</title>
        <authorList>
            <person name="Refaeli Y."/>
            <person name="Levy D.N."/>
            <person name="Weiner D.B."/>
        </authorList>
    </citation>
    <scope>FUNCTION</scope>
</reference>
<reference key="10">
    <citation type="journal article" date="1995" name="J. Virol.">
        <title>A leucine triplet repeat sequence (LXX)4 in p6gag is important for Vpr incorporation into human immunodeficiency virus type 1 particles.</title>
        <authorList>
            <person name="Lu Y.L."/>
            <person name="Bennett R.P."/>
            <person name="Wills J.W."/>
            <person name="Gorelick R."/>
            <person name="Ratner L."/>
        </authorList>
    </citation>
    <scope>INTERACTION WITH P6-GAG</scope>
</reference>
<reference key="11">
    <citation type="journal article" date="1995" name="J. Virol.">
        <title>Human immunodeficiency virus type 1 Vpr arrests the cell cycle in G2 by inhibiting the activation of p34cdc2-cyclin B.</title>
        <authorList>
            <person name="Re F."/>
            <person name="Braaten D."/>
            <person name="Franke E.K."/>
            <person name="Luban J."/>
        </authorList>
    </citation>
    <scope>FUNCTION</scope>
</reference>
<reference key="12">
    <citation type="journal article" date="1995" name="J. Virol.">
        <title>The human immunodeficiency virus type 1 vpr gene arrests infected T cells in the G2 + M phase of the cell cycle.</title>
        <authorList>
            <person name="Jowett J.B."/>
            <person name="Planelles V."/>
            <person name="Poon B."/>
            <person name="Shah N.P."/>
            <person name="Chen M.L."/>
            <person name="Chen I.S."/>
        </authorList>
    </citation>
    <scope>FUNCTION</scope>
</reference>
<reference key="13">
    <citation type="journal article" date="1996" name="J. Virol.">
        <title>Human immunodeficiency virus type 1 Vpr protein binds to the uracil DNA glycosylase DNA repair enzyme.</title>
        <authorList>
            <person name="Bouhamdan M."/>
            <person name="Benichou S."/>
            <person name="Rey F."/>
            <person name="Navarro J.-M."/>
            <person name="Agostini I."/>
            <person name="Spire B."/>
            <person name="Camonis J."/>
            <person name="Slupphaug G."/>
            <person name="Vigne R."/>
            <person name="Benarous R."/>
            <person name="Sire J."/>
        </authorList>
    </citation>
    <scope>INTERACTION WITH HUMAN UNG</scope>
</reference>
<reference key="14">
    <citation type="journal article" date="1996" name="J. Mol. Biol.">
        <title>The human immunodeficiency virus type 1 Vpr transactivator: cooperation with promoter-bound activator domains and binding to TFIIB.</title>
        <authorList>
            <person name="Agostini I."/>
            <person name="Navarro J.-M."/>
            <person name="Rey F."/>
            <person name="Bouhamdan M."/>
            <person name="Spire B."/>
            <person name="Vigne R."/>
            <person name="Sire J."/>
        </authorList>
    </citation>
    <scope>INTERACTION WITH HUMAN TFIIB</scope>
</reference>
<reference key="15">
    <citation type="journal article" date="1998" name="Virology">
        <title>Arginine residues in the C-terminus of HIV-1 Vpr are important for nuclear localization and cell cycle arrest.</title>
        <authorList>
            <person name="Zhou Y."/>
            <person name="Lu Y."/>
            <person name="Ratner L."/>
        </authorList>
    </citation>
    <scope>MUTAGENESIS OF 80-ARG--ARG-90</scope>
</reference>
<reference key="16">
    <citation type="journal article" date="1998" name="Science">
        <title>Cell cycle arrest by Vpr in HIV-1 virions and insensitivity to antiretroviral agents.</title>
        <authorList>
            <person name="Poon B."/>
            <person name="Grovit-Ferbas K."/>
            <person name="Stewart S.A."/>
            <person name="Chen I.S."/>
        </authorList>
    </citation>
    <scope>FUNCTION</scope>
</reference>
<reference key="17">
    <citation type="journal article" date="1998" name="J. Cell Biol.">
        <title>Characterization of HIV-1 vpr nuclear import: analysis of signals and pathways.</title>
        <authorList>
            <person name="Jenkins Y."/>
            <person name="McEntee M."/>
            <person name="Weis K."/>
            <person name="Greene W.C."/>
        </authorList>
    </citation>
    <scope>SUBCELLULAR LOCATION</scope>
</reference>
<reference key="18">
    <citation type="journal article" date="1997" name="J. Virol.">
        <title>Human immunodeficiency virus type 1 Vpr interacts with HHR23A, a cellular protein implicated in nucleotide excision DNA repair.</title>
        <authorList>
            <person name="Withers-Ward E.S."/>
            <person name="Jowett J.B."/>
            <person name="Stewart S.A."/>
            <person name="Xie Y.M."/>
            <person name="Garfinkel A."/>
            <person name="Shibagaki Y."/>
            <person name="Chow S.A."/>
            <person name="Shah N."/>
            <person name="Hanaoka F."/>
            <person name="Sawitz D.G."/>
            <person name="Armstrong R.W."/>
            <person name="Souza L.M."/>
            <person name="Chen I.S."/>
        </authorList>
    </citation>
    <scope>INTERACTION WITH HUMAN RAD23A</scope>
</reference>
<reference key="19">
    <citation type="journal article" date="1998" name="Proc. Natl. Acad. Sci. U.S.A.">
        <title>HIV-1 Vpr interacts with a human 34-kDa mov34 homologue, a cellular factor linked to the G2/M phase transition of the mammalian cell cycle.</title>
        <authorList>
            <person name="Mahalingam S."/>
            <person name="Ayyavoo V."/>
            <person name="Patel M."/>
            <person name="Kieber-Emmons T."/>
            <person name="Kao G.D."/>
            <person name="Muschel R.J."/>
            <person name="Weiner D.B."/>
        </authorList>
    </citation>
    <scope>INTERACTION WITH HUMAN COPS6</scope>
    <scope>MUTAGENESIS OF ALA-30; 20-LEU--LEU-26; ALA-59; LEU-67; HIS-71; GLY-75 AND CYS-76</scope>
</reference>
<reference key="20">
    <citation type="journal article" date="1998" name="EMBO J.">
        <title>Viral protein R regulates nuclear import of the HIV-1 pre-integration complex.</title>
        <authorList>
            <person name="Popov S."/>
            <person name="Rexach M."/>
            <person name="Zybarth G."/>
            <person name="Reiling N."/>
            <person name="Lee M.A."/>
            <person name="Ratner L."/>
            <person name="Lane C.M."/>
            <person name="Moore M.S."/>
            <person name="Blobel G."/>
            <person name="Bukrinsky M."/>
        </authorList>
    </citation>
    <scope>INTERACTION WITH HUMAN KPNA1 AND KPNA2</scope>
</reference>
<reference key="21">
    <citation type="journal article" date="1998" name="J. Biol. Chem.">
        <title>Cooperative actions of HIV-1 Vpr and p53 modulate viral gene transcription.</title>
        <authorList>
            <person name="Sawaya B.E."/>
            <person name="Khalili K."/>
            <person name="Mercer W.E."/>
            <person name="Denisova L."/>
            <person name="Amini S."/>
        </authorList>
    </citation>
    <scope>INTERACTION WITH HUMAN SP1</scope>
</reference>
<reference key="22">
    <citation type="journal article" date="1998" name="J. Mol. Biol.">
        <title>Human immunodeficiency virus type 1 vpr protein transactivation function: mechanism and identification of domains involved.</title>
        <authorList>
            <person name="Forget J."/>
            <person name="Yao X.J."/>
            <person name="Mercier J."/>
            <person name="Cohen E.A."/>
        </authorList>
    </citation>
    <scope>MUTAGENESIS OF LEU-23; GLU-25; ALA-30; VAL-57; ARG-62; ILE-63; 68-LEU--ILE-70 AND ARG-80</scope>
</reference>
<reference key="23">
    <citation type="journal article" date="1998" name="Proc. Natl. Acad. Sci. U.S.A.">
        <title>Extracellular HIV-1 virus protein R causes a large inward current and cell death in cultured hippocampal neurons: implications for AIDS pathology.</title>
        <authorList>
            <person name="Piller S.C."/>
            <person name="Jans P."/>
            <person name="Gage P.W."/>
            <person name="Jans D.A."/>
        </authorList>
    </citation>
    <scope>FUNCTION</scope>
</reference>
<reference key="24">
    <citation type="journal article" date="1998" name="J. Biol. Chem.">
        <title>Diversity of HIV-1 Vpr interactions involves usage of the WXXF motif of host cell proteins.</title>
        <authorList>
            <person name="Bouhamdan M."/>
            <person name="Xue Y."/>
            <person name="Baudat Y."/>
            <person name="Hu B."/>
            <person name="Sire J."/>
            <person name="Pomerantz R.J."/>
            <person name="Duan L.X."/>
        </authorList>
    </citation>
    <scope>FUNCTION</scope>
</reference>
<reference key="25">
    <citation type="journal article" date="1999" name="J. Exp. Med.">
        <title>The HIV-1 virion-associated protein vpr is a coactivator of the human glucocorticoid receptor.</title>
        <authorList>
            <person name="Kino T."/>
            <person name="Gragerov A."/>
            <person name="Kopp J.B."/>
            <person name="Stauber R.H."/>
            <person name="Pavlakis G.N."/>
            <person name="Chrousos G.P."/>
        </authorList>
    </citation>
    <scope>INTERACTION WITH HUMAN TFIIB</scope>
</reference>
<reference key="26">
    <citation type="journal article" date="1999" name="J. Virol.">
        <title>Mutational analysis of Vpr-induced G2 arrest, nuclear localization, and cell death in fission yeast.</title>
        <authorList>
            <person name="Chen M."/>
            <person name="Elder R.T."/>
            <person name="Yu M."/>
            <person name="O'Gorman M.G."/>
            <person name="Selig L."/>
            <person name="Benarous R."/>
            <person name="Yamamoto A."/>
            <person name="Zhao Y."/>
        </authorList>
    </citation>
    <scope>MUTAGENESIS OF GLU-17; TRP-18; GLU-24; GLU-25; HIS-33; PHE-34; TRP-54; HIS-71; HIS-78; SER-79; ARG-88; ALA-89 AND ARG-90</scope>
</reference>
<reference key="27">
    <citation type="journal article" date="1999" name="FEBS Lett.">
        <title>The HIV-1 Vpr co-activator induces a conformational change in TFIIB.</title>
        <authorList>
            <person name="Agostini I."/>
            <person name="Navarro J.M."/>
            <person name="Bouhamdan M."/>
            <person name="Willetts K."/>
            <person name="Rey F."/>
            <person name="Spire B."/>
            <person name="Vigne R."/>
            <person name="Pomerantz R."/>
            <person name="Sire J."/>
        </authorList>
    </citation>
    <scope>MUTAGENESIS OF GLU-25; ALA-30; VAL-57 AND ARG-80</scope>
</reference>
<reference key="28">
    <citation type="journal article" date="1999" name="Proc. Natl. Acad. Sci. U.S.A.">
        <title>Lentiviral delivery of HIV-1 Vpr protein induces apoptosis in transformed cells.</title>
        <authorList>
            <person name="Stewart S.A."/>
            <person name="Poon B."/>
            <person name="Jowett J.B."/>
            <person name="Xie Y."/>
            <person name="Chen I.S."/>
        </authorList>
    </citation>
    <scope>FUNCTION</scope>
</reference>
<reference key="29">
    <citation type="journal article" date="1999" name="J. Virol.">
        <title>The amino-terminal region of Vpr from human immunodeficiency virus type 1 forms ion channels and kills neurons.</title>
        <authorList>
            <person name="Piller S.C."/>
            <person name="Ewart G.D."/>
            <person name="Jans D.A."/>
            <person name="Gage P.W."/>
            <person name="Cox G.B."/>
        </authorList>
    </citation>
    <scope>MUTAGENESIS OF GLU-21; GLU-24; GLU-58 AND ARG-95</scope>
</reference>
<reference key="30">
    <citation type="journal article" date="2000" name="J. Virol.">
        <title>Transdominant activity of human immunodeficiency virus type 1 Vpr with a mutation at residue R73.</title>
        <authorList>
            <person name="Sawaya B.E."/>
            <person name="Khalili K."/>
            <person name="Gordon J."/>
            <person name="Srinivasan A."/>
            <person name="Richardson M."/>
            <person name="Rappaport J."/>
            <person name="Amini S."/>
        </authorList>
    </citation>
    <scope>MUTAGENESIS OF ARG-73</scope>
</reference>
<reference key="31">
    <citation type="journal article" date="2000" name="J. Exp. Med.">
        <title>The HIV-1 viral protein R induces apoptosis via a direct effect on the mitochondrial permeability transition pore.</title>
        <authorList>
            <person name="Jacotot E."/>
            <person name="Ravagnan L."/>
            <person name="Loeffler M."/>
            <person name="Ferri K.F."/>
            <person name="Vieira H.L.A."/>
            <person name="Zamzami N."/>
            <person name="Costantini P."/>
            <person name="Druillennec S."/>
            <person name="Hoebeke J."/>
            <person name="Briand J.-P."/>
            <person name="Irinopoulou T."/>
            <person name="Daugas E."/>
            <person name="Susin S.A."/>
            <person name="Cointe D."/>
            <person name="Xie Z.H."/>
            <person name="Reed J.C."/>
            <person name="Roques B.P."/>
            <person name="Kroemer G."/>
        </authorList>
    </citation>
    <scope>FUNCTION</scope>
</reference>
<reference key="32">
    <citation type="journal article" date="2000" name="J. Virol.">
        <title>Phosphorylation of human immunodeficiency virus type 1 Vpr regulates cell cycle arrest.</title>
        <authorList>
            <person name="Zhou Y."/>
            <person name="Ratner L."/>
        </authorList>
    </citation>
    <scope>PHOSPHORYLATION AT SER-79; SER-94 AND SER-96</scope>
    <scope>MUTAGENESIS OF SER-79; SER-94 AND SER-96</scope>
    <source>
        <strain>Clone pNL4-3</strain>
    </source>
</reference>
<reference key="33">
    <citation type="journal article" date="2000" name="J. Virol.">
        <title>Human immunodeficiency virus type 1 vpr induces apoptosis through caspase activation.</title>
        <authorList>
            <person name="Stewart S.A."/>
            <person name="Poon B."/>
            <person name="Song J.Y."/>
            <person name="Chen I.S."/>
        </authorList>
    </citation>
    <scope>FUNCTION</scope>
</reference>
<reference key="34">
    <citation type="journal article" date="2002" name="AIDS Res. Hum. Retroviruses">
        <title>Phosphorylation of Vpr regulates HIV type 1 nuclear import and macrophage infection.</title>
        <authorList>
            <person name="Agostini I."/>
            <person name="Popov S."/>
            <person name="Hao T."/>
            <person name="Li J.H."/>
            <person name="Dubrovsky L."/>
            <person name="Chaika O."/>
            <person name="Chaika N."/>
            <person name="Lewis R."/>
            <person name="Bukrinsky M."/>
        </authorList>
    </citation>
    <scope>PHOSPHORYLATION AT SER-79</scope>
</reference>
<reference key="35">
    <citation type="journal article" date="2003" name="Virology">
        <title>HIV-1 Vpr activates cell cycle inhibitor p21/Waf1/Cip1: a potential mechanism of G2/M cell cycle arrest.</title>
        <authorList>
            <person name="Chowdhury I.H."/>
            <person name="Wang X.F."/>
            <person name="Landau N.R."/>
            <person name="Robb M.L."/>
            <person name="Polonis V.R."/>
            <person name="Birx D.L."/>
            <person name="Kim J.H."/>
        </authorList>
    </citation>
    <scope>FUNCTION</scope>
</reference>
<reference key="36">
    <citation type="journal article" date="2003" name="J. Virol.">
        <title>Human immunodeficiency virus type 1 (HIV-1) Vpr enhances expression from unintegrated HIV-1 DNA.</title>
        <authorList>
            <person name="Poon B."/>
            <person name="Chen I.S."/>
        </authorList>
    </citation>
    <scope>FUNCTION</scope>
</reference>
<reference key="37">
    <citation type="journal article" date="2004" name="Virology">
        <title>The human immunodeficiency virus Vpr protein binds Cdc25C: implications for G2 arrest.</title>
        <authorList>
            <person name="Goh W.C."/>
            <person name="Manel N."/>
            <person name="Emerman M."/>
        </authorList>
    </citation>
    <scope>INTERACTION WITH HUMAN CDC25C</scope>
</reference>
<reference key="38">
    <citation type="journal article" date="2004" name="Mitochondrion">
        <title>Mitochondrial membrane permeabilization by HIV-1 Vpr.</title>
        <authorList>
            <person name="Deniaud A."/>
            <person name="Brenner C."/>
            <person name="Kroemer G."/>
        </authorList>
    </citation>
    <scope>INTERACTION WITH HUMAN SLC25A4; SLC25A5 AND SLC25A6</scope>
</reference>
<reference key="39">
    <citation type="journal article" date="2005" name="FEBS J.">
        <title>Molecular and functional characterization of a novel splice variant of ANKHD1 that lacks the KH domain and its role in cell survival and apoptosis.</title>
        <authorList>
            <person name="Miles M.C."/>
            <person name="Janket M.L."/>
            <person name="Wheeler E.D."/>
            <person name="Chattopadhyay A."/>
            <person name="Majumder B."/>
            <person name="Dericco J."/>
            <person name="Schafer E.A."/>
            <person name="Ayyavoo V."/>
        </authorList>
    </citation>
    <scope>INTERACTION WITH ANKHD1</scope>
</reference>
<reference key="40">
    <citation type="journal article" date="2006" name="Mol. Cells">
        <title>Role of HIV Vpr as a regulator of apoptosis and an effector on bystander cells.</title>
        <authorList>
            <person name="Moon H.S."/>
            <person name="Yang J.S."/>
        </authorList>
    </citation>
    <scope>REVIEW</scope>
</reference>
<reference key="41">
    <citation type="journal article" date="2006" name="Mol. Cell. Biol.">
        <title>Human immunodeficiency virus type 1 Vpr induces G2 checkpoint activation by interacting with the splicing factor SAP145.</title>
        <authorList>
            <person name="Terada Y."/>
            <person name="Yasuda Y."/>
        </authorList>
    </citation>
    <scope>INTERACTION WITH HUMAN SF3B2</scope>
</reference>
<reference key="42">
    <citation type="journal article" date="2007" name="Cell Cycle">
        <title>HIV1 Vpr arrests the cell cycle by recruiting DCAF1/VprBP, a receptor of the Cul4-DDB1 ubiquitin ligase.</title>
        <authorList>
            <person name="Le Rouzic E."/>
            <person name="Belaiedouni N."/>
            <person name="Estrabaud E."/>
            <person name="Morel M."/>
            <person name="Rain J.-C."/>
            <person name="Transy C."/>
            <person name="Margottin-Goguet F."/>
        </authorList>
    </citation>
    <scope>FUNCTION</scope>
</reference>
<reference key="43">
    <citation type="journal article" date="2007" name="PLoS Pathog.">
        <title>HIV-1 Vpr-mediated G2 arrest involves the DDB1-CUL4A[VPRBP] E3 ubiquitin ligase.</title>
        <authorList>
            <person name="Belzile J.P."/>
            <person name="Duisit G."/>
            <person name="Rougeau N."/>
            <person name="Mercier J."/>
            <person name="Finzi A."/>
            <person name="Cohen E.A."/>
        </authorList>
    </citation>
    <scope>FUNCTION</scope>
</reference>
<reference key="44">
    <citation type="journal article" date="2013" name="J. Biol. Chem.">
        <title>HIV-1 Vpr protein inhibits telomerase activity via the EDD-DDB1-VPRBP E3 ligase complex.</title>
        <authorList>
            <person name="Wang X."/>
            <person name="Singh S."/>
            <person name="Jung H.Y."/>
            <person name="Yang G."/>
            <person name="Jun S."/>
            <person name="Sastry K.J."/>
            <person name="Park J.I."/>
        </authorList>
    </citation>
    <scope>INTERACTION WITH HOST DCAF1</scope>
</reference>
<reference key="45">
    <citation type="journal article" date="2013" name="PLoS ONE">
        <title>HIV-1 Vpr Induces the Degradation of ZIP and sZIP, Adaptors of the NuRD Chromatin Remodeling Complex, by Hijacking DCAF1/VprBP.</title>
        <authorList>
            <person name="Maudet C."/>
            <person name="Sourisce A."/>
            <person name="Dragin L."/>
            <person name="Lahouassa H."/>
            <person name="Rain J.C."/>
            <person name="Bouaziz S."/>
            <person name="Ramirez B.C."/>
            <person name="Margottin-Goguet F."/>
        </authorList>
    </citation>
    <scope>INTERACTION WITH HOST DCAF1</scope>
</reference>
<accession>P05928</accession>
<sequence length="96" mass="11295">MEQAPEDQGPQREPHNEWTLELLEELKNEAVRHFPRIWLHGLGQHIYETYGDTWAGVEAIIRILQQLLFIHFRIGCRHSRIGVTQQRRARNGASRS</sequence>
<evidence type="ECO:0000255" key="1">
    <source>
        <dbReference type="HAMAP-Rule" id="MF_04080"/>
    </source>
</evidence>
<evidence type="ECO:0000269" key="2">
    <source>
    </source>
</evidence>
<evidence type="ECO:0000269" key="3">
    <source>
    </source>
</evidence>
<evidence type="ECO:0000269" key="4">
    <source>
    </source>
</evidence>
<evidence type="ECO:0000269" key="5">
    <source>
    </source>
</evidence>
<evidence type="ECO:0000269" key="6">
    <source>
    </source>
</evidence>
<evidence type="ECO:0000269" key="7">
    <source>
    </source>
</evidence>
<evidence type="ECO:0000269" key="8">
    <source>
    </source>
</evidence>
<evidence type="ECO:0000269" key="9">
    <source>
    </source>
</evidence>
<evidence type="ECO:0000269" key="10">
    <source>
    </source>
</evidence>
<evidence type="ECO:0000269" key="11">
    <source>
    </source>
</evidence>
<evidence type="ECO:0000269" key="12">
    <source>
    </source>
</evidence>
<evidence type="ECO:0000269" key="13">
    <source>
    </source>
</evidence>
<evidence type="ECO:0000269" key="14">
    <source>
    </source>
</evidence>
<evidence type="ECO:0000269" key="15">
    <source>
    </source>
</evidence>
<evidence type="ECO:0000269" key="16">
    <source>
    </source>
</evidence>
<evidence type="ECO:0000269" key="17">
    <source>
    </source>
</evidence>
<evidence type="ECO:0000269" key="18">
    <source>
    </source>
</evidence>
<evidence type="ECO:0000269" key="19">
    <source>
    </source>
</evidence>
<evidence type="ECO:0000269" key="20">
    <source>
    </source>
</evidence>
<evidence type="ECO:0000269" key="21">
    <source>
    </source>
</evidence>
<evidence type="ECO:0000269" key="22">
    <source>
    </source>
</evidence>
<evidence type="ECO:0000269" key="23">
    <source>
    </source>
</evidence>
<evidence type="ECO:0000269" key="24">
    <source>
    </source>
</evidence>
<evidence type="ECO:0000269" key="25">
    <source>
    </source>
</evidence>
<evidence type="ECO:0000269" key="26">
    <source>
    </source>
</evidence>
<evidence type="ECO:0000269" key="27">
    <source>
    </source>
</evidence>
<evidence type="ECO:0000269" key="28">
    <source>
    </source>
</evidence>
<evidence type="ECO:0000269" key="29">
    <source>
    </source>
</evidence>
<evidence type="ECO:0000269" key="30">
    <source>
    </source>
</evidence>
<evidence type="ECO:0000269" key="31">
    <source>
    </source>
</evidence>
<evidence type="ECO:0000269" key="32">
    <source>
    </source>
</evidence>
<evidence type="ECO:0000269" key="33">
    <source>
    </source>
</evidence>
<evidence type="ECO:0000269" key="34">
    <source>
    </source>
</evidence>
<evidence type="ECO:0000269" key="35">
    <source>
    </source>
</evidence>
<evidence type="ECO:0000269" key="36">
    <source>
    </source>
</evidence>
<evidence type="ECO:0000269" key="37">
    <source>
    </source>
</evidence>
<evidence type="ECO:0000269" key="38">
    <source>
    </source>
</evidence>
<evidence type="ECO:0000269" key="39">
    <source>
    </source>
</evidence>
<evidence type="ECO:0000269" key="40">
    <source>
    </source>
</evidence>
<evidence type="ECO:0000269" key="41">
    <source>
    </source>
</evidence>
<comment type="function">
    <text evidence="1 5 6 7 11 12 17 18 19 20 23 26 27 28 36 37 38">During virus entry, plays a role in the transport of the viral pre-integration (PIC) complex to the host nucleus. This function is crucial for viral infection of non-dividing macrophages. May act directly at the nuclear pore complex, by binding nucleoporins phenylalanine-glycine (FG)-repeat regions.</text>
</comment>
<comment type="function">
    <text evidence="1">During virus replication, may deplete host UNG protein, and incude G2-M cell cycle arrest. Acts by targeting specific host proteins for degradation by the 26S proteasome, through association with the cellular CUL4A-DDB1 E3 ligase complex by direct interaction with host VPRPB/DCAF-1. Cell cycle arrest reportedly occurs within hours of infection and is not blocked by antiviral agents, suggesting that it is initiated by the VPR carried into the virion. Additionally, VPR induces apoptosis in a cell cycle dependent manner suggesting that these two effects are mechanistically linked. Detected in the serum and cerebrospinal fluid of AIDS patient, VPR may also induce cell death to bystander cells.</text>
</comment>
<comment type="subunit">
    <text evidence="1 13 14 15 16 21 22 24 25 30 31 32 33 35 39 41">Homooligomer, may form homodimer. Interacts with p6-gag region of the Pr55 Gag precursor protein through a (Leu-X-X)4 motif near the C-terminus of the P6gag protein. Interacts with host UNG. May interact with host RAD23A/HHR23A. Interacts with host VPRBP/DCAF1, leading to hijack the CUL4A-RBX1-DDB1-DCAF1/VPRBP complex, mediating ubiquitination of host proteins such as TERT and ZGPAT and arrest of the cell cycle in G2 phase.</text>
</comment>
<comment type="interaction">
    <interactant intactId="EBI-9210238">
        <id>P05928</id>
    </interactant>
    <interactant intactId="EBI-9915372">
        <id>Q9Y4B6-3</id>
        <label>DCAF1</label>
    </interactant>
    <organismsDiffer>true</organismsDiffer>
    <experiments>2</experiments>
</comment>
<comment type="subcellular location">
    <subcellularLocation>
        <location evidence="1">Virion</location>
    </subcellularLocation>
    <subcellularLocation>
        <location evidence="1">Host nucleus</location>
    </subcellularLocation>
    <subcellularLocation>
        <location evidence="1">Host extracellular space</location>
    </subcellularLocation>
    <text evidence="1">Incorporation into virion is dependent on p6 GAG sequences. Lacks a canonical nuclear localization signal, thus import into nucleus may function independently of the human importin pathway. Detected in high quantity in the serum and cerebrospinal fluid of AIDS patient.</text>
</comment>
<comment type="PTM">
    <text evidence="1 9 10">Phosphorylated on several residues by host. These phosphorylations regulate VPR activity for the nuclear import of the HIV-1 pre-integration complex.</text>
</comment>
<comment type="miscellaneous">
    <text>The infectious clone pNL4-3 is a chimeric provirus that consists of DNA from HIV isolates NY5 (5' half) and BRU (3' half).</text>
</comment>
<comment type="miscellaneous">
    <text evidence="1">HIV-1 lineages are divided in three main groups, M (for Major), O (for Outlier), and N (for New, or Non-M, Non-O). The vast majority of strains found worldwide belong to the group M. Group O seems to be endemic to and largely confined to Cameroon and neighboring countries in West Central Africa, where these viruses represent a small minority of HIV-1 strains. The group N is represented by a limited number of isolates from Cameroonian persons. The group M is further subdivided in 9 clades or subtypes (A to D, F to H, J and K).</text>
</comment>
<comment type="similarity">
    <text evidence="1">Belongs to the HIV-1 VPR protein family.</text>
</comment>
<name>VPR_HV1BR</name>
<protein>
    <recommendedName>
        <fullName evidence="1">Protein Vpr</fullName>
    </recommendedName>
    <alternativeName>
        <fullName evidence="1">R ORF protein</fullName>
    </alternativeName>
    <alternativeName>
        <fullName evidence="1">Viral protein R</fullName>
    </alternativeName>
</protein>
<feature type="chain" id="PRO_0000085439" description="Protein Vpr">
    <location>
        <begin position="1"/>
        <end position="96"/>
    </location>
</feature>
<feature type="region of interest" description="Homooligomerization" evidence="1">
    <location>
        <begin position="1"/>
        <end position="42"/>
    </location>
</feature>
<feature type="modified residue" description="Phosphoserine; by host" evidence="1 9 10">
    <location>
        <position position="79"/>
    </location>
</feature>
<feature type="modified residue" description="Phosphoserine; by host" evidence="1 9">
    <location>
        <position position="94"/>
    </location>
</feature>
<feature type="modified residue" description="Phosphoserine; by host" evidence="1 9">
    <location>
        <position position="96"/>
    </location>
</feature>
<feature type="sequence variant" description="In strain: Clone pNL4-3.">
    <original>H</original>
    <variation>Y</variation>
    <location>
        <position position="15"/>
    </location>
</feature>
<feature type="sequence variant" description="In strain: Clone pNL4-3.">
    <original>N</original>
    <variation>S</variation>
    <location>
        <position position="28"/>
    </location>
</feature>
<feature type="sequence variant" description="In strain: Clone pNL4-3.">
    <original>G</original>
    <variation>N</variation>
    <location>
        <position position="41"/>
    </location>
</feature>
<feature type="sequence variant" description="In strain: Clone pNL4-3.">
    <original>Q</original>
    <variation>R</variation>
    <location>
        <position position="85"/>
    </location>
</feature>
<feature type="mutagenesis site" description="No effect." evidence="2">
    <original>E</original>
    <variation>D</variation>
    <location>
        <position position="17"/>
    </location>
</feature>
<feature type="mutagenesis site" description="Partial loss of cell killing." evidence="2">
    <original>W</original>
    <variation>R</variation>
    <location>
        <position position="18"/>
    </location>
</feature>
<feature type="mutagenesis site" description="Partial loss of nuclear localization." evidence="35">
    <original>LELLEEL</original>
    <variation>AEAAEEA</variation>
    <location>
        <begin position="20"/>
        <end position="26"/>
    </location>
</feature>
<feature type="mutagenesis site" description="Partial loss of Na(+) permeability for ion channel function." evidence="3">
    <original>E</original>
    <variation>Q</variation>
    <location>
        <position position="21"/>
    </location>
</feature>
<feature type="mutagenesis site" description="80% loss incorporation into virion. 10% loss of LTR transactivation." evidence="40">
    <original>L</original>
    <variation>F</variation>
    <location>
        <position position="23"/>
    </location>
</feature>
<feature type="mutagenesis site" description="Partial loss of cell killing." evidence="2 3">
    <original>E</original>
    <variation>G</variation>
    <location>
        <position position="24"/>
    </location>
</feature>
<feature type="mutagenesis site" description="Partial loss of Na(+) permeability for ion channel function." evidence="2 3">
    <original>E</original>
    <variation>Q</variation>
    <location>
        <position position="24"/>
    </location>
</feature>
<feature type="mutagenesis site" description="75% loss incorporation into virion. Perinuclear localization. Partial loss of cell killing. No effect on human TFIIB binding." evidence="2 4 40">
    <original>E</original>
    <variation>K</variation>
    <location>
        <position position="25"/>
    </location>
</feature>
<feature type="mutagenesis site" description="80% loss incorporation into virion. Perinuclear localization. 56% loss of LTR transactivation. No effect on human TFIIB binding." evidence="4 35 40">
    <original>A</original>
    <variation>F</variation>
    <location>
        <position position="30"/>
    </location>
</feature>
<feature type="mutagenesis site" description="Complete loss of G2/M cell cycle arrest." evidence="4 35 40">
    <original>A</original>
    <variation>L</variation>
    <location>
        <position position="30"/>
    </location>
</feature>
<feature type="mutagenesis site" description="No effect on incorporation in virion." evidence="29">
    <original>R</original>
    <variation>A</variation>
    <location>
        <position position="32"/>
    </location>
</feature>
<feature type="mutagenesis site" description="Partial loss of nuclear localization, cell killing and G2/M cell cycle arrest." evidence="2">
    <original>H</original>
    <variation>R</variation>
    <location>
        <position position="33"/>
    </location>
</feature>
<feature type="mutagenesis site" description="Partial loss of cell killing and nuclear localization." evidence="2">
    <original>F</original>
    <variation>I</variation>
    <location>
        <position position="34"/>
    </location>
</feature>
<feature type="mutagenesis site" description="Partial loss of cell killing." evidence="2">
    <original>W</original>
    <variation>R</variation>
    <location>
        <position position="54"/>
    </location>
</feature>
<feature type="mutagenesis site" description="25% loss incorporation into virion. Perinuclear localization. No effect on human TFIIB binding." evidence="4 40">
    <original>V</original>
    <variation>L</variation>
    <location>
        <position position="57"/>
    </location>
</feature>
<feature type="mutagenesis site" description="No effect on ion channel activity." evidence="3">
    <original>E</original>
    <variation>Q</variation>
    <location>
        <position position="58"/>
    </location>
</feature>
<feature type="mutagenesis site" description="Complete loss of G2/M cell cycle arrest." evidence="35">
    <original>A</original>
    <variation>P</variation>
    <location>
        <position position="59"/>
    </location>
</feature>
<feature type="mutagenesis site" description="No effect on incorporation in virion." evidence="29 40">
    <original>R</original>
    <variation>A</variation>
    <location>
        <position position="62"/>
    </location>
</feature>
<feature type="mutagenesis site" description="30% loss incorporation into virion. Perinuclear localization. 8% loss of LTR transactivation." evidence="29 40">
    <original>R</original>
    <variation>P</variation>
    <location>
        <position position="62"/>
    </location>
</feature>
<feature type="mutagenesis site" description="10% loss incorporation into virion. Perinuclear localization. 31% loss of LTR transactivation." evidence="40">
    <original>I</original>
    <variation>F</variation>
    <location>
        <position position="63"/>
    </location>
</feature>
<feature type="mutagenesis site" description="35% loss incorporation into virion. Perinuclear localization. 22% loss of LTR transactivation." evidence="40">
    <original>I</original>
    <variation>K</variation>
    <location>
        <position position="63"/>
    </location>
</feature>
<feature type="mutagenesis site" description="Partial loss of nuclear localization. Complete loss of G2/M cell cycle arrest." evidence="35">
    <original>L</original>
    <variation>S</variation>
    <location>
        <position position="67"/>
    </location>
</feature>
<feature type="mutagenesis site" description="Complete loss of G2/M cell cycle arrest. Perinuclear localization. 66% loss of LTR transactivation." evidence="40">
    <original>LFI</original>
    <variation>KFR</variation>
    <location>
        <begin position="68"/>
        <end position="70"/>
    </location>
</feature>
<feature type="mutagenesis site" description="Complete loss of G2/M cell cycle arrest." evidence="2 35">
    <original>H</original>
    <variation>C</variation>
    <location>
        <position position="71"/>
    </location>
</feature>
<feature type="mutagenesis site" description="Partial loss of nuclear localization, cell killing and G2/M cell cycle arrest." evidence="2 35">
    <original>H</original>
    <variation>R</variation>
    <location>
        <position position="71"/>
    </location>
</feature>
<feature type="mutagenesis site" description="Complete loss of LTR transactivation and of G2/M cell cycle arrest. Transdominant mutation." evidence="8">
    <original>R</original>
    <variation>A</variation>
    <variation>S</variation>
    <location>
        <position position="73"/>
    </location>
</feature>
<feature type="mutagenesis site" description="Complete loss of G2/M cell cycle arrest." evidence="35">
    <original>G</original>
    <variation>A</variation>
    <location>
        <position position="75"/>
    </location>
</feature>
<feature type="mutagenesis site" description="Complete loss of incorporation in virion." evidence="29 35">
    <original>C</original>
    <variation>A</variation>
    <location>
        <position position="76"/>
    </location>
</feature>
<feature type="mutagenesis site" description="Complete loss of G2/M cell cycle arrest." evidence="29 35">
    <original>C</original>
    <variation>S</variation>
    <location>
        <position position="76"/>
    </location>
</feature>
<feature type="mutagenesis site" description="Partial loss of G2/M cell cycle arrest." evidence="2">
    <original>H</original>
    <variation>R</variation>
    <location>
        <position position="78"/>
    </location>
</feature>
<feature type="mutagenesis site" description="Complete loss of cell cycle arrest." evidence="2 9">
    <original>S</original>
    <variation>A</variation>
    <location>
        <position position="79"/>
    </location>
</feature>
<feature type="mutagenesis site" description="Partial loss of nuclear localization." evidence="34">
    <original>RIGVTQQRRAR</original>
    <variation>NIGVTNQNNAN</variation>
    <location>
        <begin position="80"/>
        <end position="90"/>
    </location>
</feature>
<feature type="mutagenesis site" description="Complete loss of G2/M cell cycle arrest. 66% loss of LTR transactivation. Complete loss of human TFIIB binding." evidence="4 40">
    <original>R</original>
    <variation>A</variation>
    <location>
        <position position="80"/>
    </location>
</feature>
<feature type="mutagenesis site" description="Partial loss of G2/M cell cycle arrest." evidence="2">
    <original>R</original>
    <variation>K</variation>
    <location>
        <position position="88"/>
    </location>
</feature>
<feature type="mutagenesis site" description="No effect." evidence="2">
    <original>A</original>
    <variation>T</variation>
    <location>
        <position position="89"/>
    </location>
</feature>
<feature type="mutagenesis site" description="Partial loss of cell killing and G2/M cell cycle arrest." evidence="2">
    <original>R</original>
    <variation>K</variation>
    <location>
        <position position="90"/>
    </location>
</feature>
<feature type="mutagenesis site" description="Partial loss of cell cycle arrest." evidence="9">
    <original>S</original>
    <variation>G</variation>
    <location>
        <position position="94"/>
    </location>
</feature>
<feature type="mutagenesis site" description="No effect on ion channel activity." evidence="3">
    <original>R</original>
    <variation>Q</variation>
    <location>
        <position position="95"/>
    </location>
</feature>
<feature type="mutagenesis site" description="No effect on cell cycle arrest." evidence="9">
    <original>S</original>
    <variation>P</variation>
    <location>
        <position position="96"/>
    </location>
</feature>
<dbReference type="EMBL" id="K02013">
    <property type="protein sequence ID" value="AAB59749.1"/>
    <property type="molecule type" value="Genomic_RNA"/>
</dbReference>
<dbReference type="BMRB" id="P05928"/>
<dbReference type="SMR" id="P05928"/>
<dbReference type="IntAct" id="P05928">
    <property type="interactions" value="13"/>
</dbReference>
<dbReference type="iPTMnet" id="P05928"/>
<dbReference type="Proteomes" id="UP000007692">
    <property type="component" value="Genome"/>
</dbReference>
<dbReference type="GO" id="GO:0043657">
    <property type="term" value="C:host cell"/>
    <property type="evidence" value="ECO:0007669"/>
    <property type="project" value="GOC"/>
</dbReference>
<dbReference type="GO" id="GO:0042025">
    <property type="term" value="C:host cell nucleus"/>
    <property type="evidence" value="ECO:0007669"/>
    <property type="project" value="UniProtKB-SubCell"/>
</dbReference>
<dbReference type="GO" id="GO:0043655">
    <property type="term" value="C:host extracellular space"/>
    <property type="evidence" value="ECO:0007669"/>
    <property type="project" value="UniProtKB-SubCell"/>
</dbReference>
<dbReference type="GO" id="GO:0044423">
    <property type="term" value="C:virion component"/>
    <property type="evidence" value="ECO:0007669"/>
    <property type="project" value="UniProtKB-UniRule"/>
</dbReference>
<dbReference type="GO" id="GO:0006351">
    <property type="term" value="P:DNA-templated transcription"/>
    <property type="evidence" value="ECO:0007669"/>
    <property type="project" value="UniProtKB-UniRule"/>
</dbReference>
<dbReference type="GO" id="GO:0034220">
    <property type="term" value="P:monoatomic ion transmembrane transport"/>
    <property type="evidence" value="ECO:0007669"/>
    <property type="project" value="UniProtKB-KW"/>
</dbReference>
<dbReference type="GO" id="GO:0051260">
    <property type="term" value="P:protein homooligomerization"/>
    <property type="evidence" value="ECO:0007669"/>
    <property type="project" value="UniProtKB-UniRule"/>
</dbReference>
<dbReference type="GO" id="GO:0006355">
    <property type="term" value="P:regulation of DNA-templated transcription"/>
    <property type="evidence" value="ECO:0007669"/>
    <property type="project" value="UniProtKB-UniRule"/>
</dbReference>
<dbReference type="GO" id="GO:0046718">
    <property type="term" value="P:symbiont entry into host cell"/>
    <property type="evidence" value="ECO:0007669"/>
    <property type="project" value="UniProtKB-KW"/>
</dbReference>
<dbReference type="GO" id="GO:0052151">
    <property type="term" value="P:symbiont-mediated activation of host apoptosis"/>
    <property type="evidence" value="ECO:0007669"/>
    <property type="project" value="UniProtKB-UniRule"/>
</dbReference>
<dbReference type="GO" id="GO:0039592">
    <property type="term" value="P:symbiont-mediated arrest of host cell cycle during G2/M transition"/>
    <property type="evidence" value="ECO:0007669"/>
    <property type="project" value="UniProtKB-UniRule"/>
</dbReference>
<dbReference type="GO" id="GO:0075732">
    <property type="term" value="P:viral penetration into host nucleus"/>
    <property type="evidence" value="ECO:0007669"/>
    <property type="project" value="UniProtKB-UniRule"/>
</dbReference>
<dbReference type="FunFam" id="1.20.5.90:FF:000001">
    <property type="entry name" value="Protein Vpr"/>
    <property type="match status" value="1"/>
</dbReference>
<dbReference type="Gene3D" id="6.10.210.10">
    <property type="match status" value="1"/>
</dbReference>
<dbReference type="Gene3D" id="1.20.5.90">
    <property type="entry name" value="VpR/VpX protein, C-terminal domain"/>
    <property type="match status" value="1"/>
</dbReference>
<dbReference type="HAMAP" id="MF_04080">
    <property type="entry name" value="HIV_VPR"/>
    <property type="match status" value="1"/>
</dbReference>
<dbReference type="InterPro" id="IPR000012">
    <property type="entry name" value="RetroV_VpR/X"/>
</dbReference>
<dbReference type="Pfam" id="PF00522">
    <property type="entry name" value="VPR"/>
    <property type="match status" value="1"/>
</dbReference>
<dbReference type="PRINTS" id="PR00444">
    <property type="entry name" value="HIVVPRVPX"/>
</dbReference>
<organism>
    <name type="scientific">Human immunodeficiency virus type 1 group M subtype B (isolate BRU/LAI)</name>
    <name type="common">HIV-1</name>
    <dbReference type="NCBI Taxonomy" id="11686"/>
    <lineage>
        <taxon>Viruses</taxon>
        <taxon>Riboviria</taxon>
        <taxon>Pararnavirae</taxon>
        <taxon>Artverviricota</taxon>
        <taxon>Revtraviricetes</taxon>
        <taxon>Ortervirales</taxon>
        <taxon>Retroviridae</taxon>
        <taxon>Orthoretrovirinae</taxon>
        <taxon>Lentivirus</taxon>
        <taxon>Human immunodeficiency virus type 1</taxon>
    </lineage>
</organism>
<gene>
    <name evidence="1" type="primary">vpr</name>
</gene>
<keyword id="KW-0010">Activator</keyword>
<keyword id="KW-0014">AIDS</keyword>
<keyword id="KW-0053">Apoptosis</keyword>
<keyword id="KW-0131">Cell cycle</keyword>
<keyword id="KW-1079">Host G2/M cell cycle arrest by virus</keyword>
<keyword id="KW-1048">Host nucleus</keyword>
<keyword id="KW-0945">Host-virus interaction</keyword>
<keyword id="KW-0407">Ion channel</keyword>
<keyword id="KW-0406">Ion transport</keyword>
<keyword id="KW-1121">Modulation of host cell cycle by virus</keyword>
<keyword id="KW-0597">Phosphoprotein</keyword>
<keyword id="KW-1185">Reference proteome</keyword>
<keyword id="KW-0804">Transcription</keyword>
<keyword id="KW-0805">Transcription regulation</keyword>
<keyword id="KW-0813">Transport</keyword>
<keyword id="KW-1163">Viral penetration into host nucleus</keyword>
<keyword id="KW-0946">Virion</keyword>
<keyword id="KW-1160">Virus entry into host cell</keyword>
<organismHost>
    <name type="scientific">Homo sapiens</name>
    <name type="common">Human</name>
    <dbReference type="NCBI Taxonomy" id="9606"/>
</organismHost>
<proteinExistence type="evidence at protein level"/>